<keyword id="KW-0002">3D-structure</keyword>
<keyword id="KW-0249">Electron transport</keyword>
<keyword id="KW-0472">Membrane</keyword>
<keyword id="KW-0496">Mitochondrion</keyword>
<keyword id="KW-0999">Mitochondrion inner membrane</keyword>
<keyword id="KW-0520">NAD</keyword>
<keyword id="KW-1185">Reference proteome</keyword>
<keyword id="KW-0679">Respiratory chain</keyword>
<keyword id="KW-1278">Translocase</keyword>
<keyword id="KW-0812">Transmembrane</keyword>
<keyword id="KW-1133">Transmembrane helix</keyword>
<keyword id="KW-0813">Transport</keyword>
<keyword id="KW-0830">Ubiquinone</keyword>
<geneLocation type="mitochondrion"/>
<evidence type="ECO:0000250" key="1">
    <source>
        <dbReference type="UniProtKB" id="P03923"/>
    </source>
</evidence>
<evidence type="ECO:0000250" key="2">
    <source>
        <dbReference type="UniProtKB" id="P03924"/>
    </source>
</evidence>
<evidence type="ECO:0000255" key="3"/>
<evidence type="ECO:0000305" key="4"/>
<evidence type="ECO:0000312" key="5">
    <source>
        <dbReference type="Proteomes" id="UP000002356"/>
    </source>
</evidence>
<evidence type="ECO:0007829" key="6">
    <source>
        <dbReference type="PDB" id="6ZKA"/>
    </source>
</evidence>
<evidence type="ECO:0007829" key="7">
    <source>
        <dbReference type="PDB" id="6ZKB"/>
    </source>
</evidence>
<evidence type="ECO:0007829" key="8">
    <source>
        <dbReference type="PDB" id="6ZKM"/>
    </source>
</evidence>
<organism>
    <name type="scientific">Ovis aries</name>
    <name type="common">Sheep</name>
    <dbReference type="NCBI Taxonomy" id="9940"/>
    <lineage>
        <taxon>Eukaryota</taxon>
        <taxon>Metazoa</taxon>
        <taxon>Chordata</taxon>
        <taxon>Craniata</taxon>
        <taxon>Vertebrata</taxon>
        <taxon>Euteleostomi</taxon>
        <taxon>Mammalia</taxon>
        <taxon>Eutheria</taxon>
        <taxon>Laurasiatheria</taxon>
        <taxon>Artiodactyla</taxon>
        <taxon>Ruminantia</taxon>
        <taxon>Pecora</taxon>
        <taxon>Bovidae</taxon>
        <taxon>Caprinae</taxon>
        <taxon>Ovis</taxon>
    </lineage>
</organism>
<gene>
    <name type="primary">MT-ND6</name>
    <name type="synonym">MTND6</name>
    <name type="synonym">NADH6</name>
    <name type="synonym">ND6</name>
</gene>
<reference key="1">
    <citation type="journal article" date="1998" name="J. Mol. Evol.">
        <title>The complete mitochondrial DNA sequence of the domestic sheep (Ovis aries) and comparison with the other major ovine haplotype.</title>
        <authorList>
            <person name="Hiendleder S."/>
            <person name="Lewalski H."/>
            <person name="Wassmuth R."/>
            <person name="Janke A."/>
        </authorList>
    </citation>
    <scope>NUCLEOTIDE SEQUENCE [LARGE SCALE GENOMIC DNA]</scope>
    <source>
        <strain evidence="5">Merinolandschaf</strain>
        <tissue>Liver</tissue>
    </source>
</reference>
<sequence>MMTYIVFILSIIFVMGFVGFSSKPSPIYGGLGLIVSGGVGCGIVLNFGGSFLGLMVFLIYLGGMMVVFGYTTAMATEQYPEVWVSNKVVLGTFITGLLMEFLMVYYVLKDKEVEIVFKFNGMGDWVIYDTGDSGFFSEEAMGIAALYSYGTWLVIVTGWSLLIGVVVIMEITRGN</sequence>
<dbReference type="EC" id="7.1.1.2" evidence="1"/>
<dbReference type="EMBL" id="AF010406">
    <property type="protein sequence ID" value="AAD10106.1"/>
    <property type="molecule type" value="Genomic_DNA"/>
</dbReference>
<dbReference type="PIR" id="T11061">
    <property type="entry name" value="T11061"/>
</dbReference>
<dbReference type="RefSeq" id="NP_008417.1">
    <property type="nucleotide sequence ID" value="NC_001941.1"/>
</dbReference>
<dbReference type="PDB" id="5LNK">
    <property type="method" value="EM"/>
    <property type="resolution" value="3.90 A"/>
    <property type="chains" value="J=1-175"/>
</dbReference>
<dbReference type="PDB" id="6Q9B">
    <property type="method" value="EM"/>
    <property type="resolution" value="3.90 A"/>
    <property type="chains" value="D6=1-175"/>
</dbReference>
<dbReference type="PDB" id="6QA9">
    <property type="method" value="EM"/>
    <property type="resolution" value="4.10 A"/>
    <property type="chains" value="D6=1-175"/>
</dbReference>
<dbReference type="PDB" id="6QBX">
    <property type="method" value="EM"/>
    <property type="resolution" value="4.20 A"/>
    <property type="chains" value="D6=1-175"/>
</dbReference>
<dbReference type="PDB" id="6QC2">
    <property type="method" value="EM"/>
    <property type="resolution" value="4.20 A"/>
    <property type="chains" value="D6=1-175"/>
</dbReference>
<dbReference type="PDB" id="6QC3">
    <property type="method" value="EM"/>
    <property type="resolution" value="4.20 A"/>
    <property type="chains" value="D6=1-175"/>
</dbReference>
<dbReference type="PDB" id="6QC4">
    <property type="method" value="EM"/>
    <property type="resolution" value="4.60 A"/>
    <property type="chains" value="D6=1-175"/>
</dbReference>
<dbReference type="PDB" id="6QC5">
    <property type="method" value="EM"/>
    <property type="resolution" value="4.30 A"/>
    <property type="chains" value="D6=1-175"/>
</dbReference>
<dbReference type="PDB" id="6QC6">
    <property type="method" value="EM"/>
    <property type="resolution" value="4.10 A"/>
    <property type="chains" value="D6=1-175"/>
</dbReference>
<dbReference type="PDB" id="6QC7">
    <property type="method" value="EM"/>
    <property type="resolution" value="4.40 A"/>
    <property type="chains" value="D6=1-175"/>
</dbReference>
<dbReference type="PDB" id="6QC8">
    <property type="method" value="EM"/>
    <property type="resolution" value="4.20 A"/>
    <property type="chains" value="D6=1-175"/>
</dbReference>
<dbReference type="PDB" id="6QC9">
    <property type="method" value="EM"/>
    <property type="resolution" value="5.70 A"/>
    <property type="chains" value="D6=1-175"/>
</dbReference>
<dbReference type="PDB" id="6QCA">
    <property type="method" value="EM"/>
    <property type="resolution" value="6.20 A"/>
    <property type="chains" value="D6=1-175"/>
</dbReference>
<dbReference type="PDB" id="6QCF">
    <property type="method" value="EM"/>
    <property type="resolution" value="6.50 A"/>
    <property type="chains" value="D6=1-175"/>
</dbReference>
<dbReference type="PDB" id="6ZKA">
    <property type="method" value="EM"/>
    <property type="resolution" value="2.50 A"/>
    <property type="chains" value="J=1-175"/>
</dbReference>
<dbReference type="PDB" id="6ZKB">
    <property type="method" value="EM"/>
    <property type="resolution" value="2.90 A"/>
    <property type="chains" value="J=1-175"/>
</dbReference>
<dbReference type="PDB" id="6ZKC">
    <property type="method" value="EM"/>
    <property type="resolution" value="3.10 A"/>
    <property type="chains" value="J=1-175"/>
</dbReference>
<dbReference type="PDB" id="6ZKD">
    <property type="method" value="EM"/>
    <property type="resolution" value="2.70 A"/>
    <property type="chains" value="J=1-175"/>
</dbReference>
<dbReference type="PDB" id="6ZKE">
    <property type="method" value="EM"/>
    <property type="resolution" value="2.60 A"/>
    <property type="chains" value="J=1-175"/>
</dbReference>
<dbReference type="PDB" id="6ZKF">
    <property type="method" value="EM"/>
    <property type="resolution" value="2.80 A"/>
    <property type="chains" value="J=1-175"/>
</dbReference>
<dbReference type="PDB" id="6ZKG">
    <property type="method" value="EM"/>
    <property type="resolution" value="3.40 A"/>
    <property type="chains" value="J=1-175"/>
</dbReference>
<dbReference type="PDB" id="6ZKH">
    <property type="method" value="EM"/>
    <property type="resolution" value="3.00 A"/>
    <property type="chains" value="J=1-175"/>
</dbReference>
<dbReference type="PDB" id="6ZKI">
    <property type="method" value="EM"/>
    <property type="resolution" value="2.80 A"/>
    <property type="chains" value="J=1-175"/>
</dbReference>
<dbReference type="PDB" id="6ZKJ">
    <property type="method" value="EM"/>
    <property type="resolution" value="3.00 A"/>
    <property type="chains" value="J=1-175"/>
</dbReference>
<dbReference type="PDB" id="6ZKK">
    <property type="method" value="EM"/>
    <property type="resolution" value="3.70 A"/>
    <property type="chains" value="J=1-175"/>
</dbReference>
<dbReference type="PDB" id="6ZKL">
    <property type="method" value="EM"/>
    <property type="resolution" value="3.10 A"/>
    <property type="chains" value="J=1-175"/>
</dbReference>
<dbReference type="PDB" id="6ZKM">
    <property type="method" value="EM"/>
    <property type="resolution" value="2.80 A"/>
    <property type="chains" value="J=1-175"/>
</dbReference>
<dbReference type="PDB" id="6ZKN">
    <property type="method" value="EM"/>
    <property type="resolution" value="2.90 A"/>
    <property type="chains" value="J=1-175"/>
</dbReference>
<dbReference type="PDB" id="6ZKO">
    <property type="method" value="EM"/>
    <property type="resolution" value="3.80 A"/>
    <property type="chains" value="J=1-175"/>
</dbReference>
<dbReference type="PDB" id="6ZKP">
    <property type="method" value="EM"/>
    <property type="resolution" value="3.20 A"/>
    <property type="chains" value="J=1-175"/>
</dbReference>
<dbReference type="PDB" id="6ZKQ">
    <property type="method" value="EM"/>
    <property type="resolution" value="3.30 A"/>
    <property type="chains" value="J=1-175"/>
</dbReference>
<dbReference type="PDB" id="6ZKR">
    <property type="method" value="EM"/>
    <property type="resolution" value="3.50 A"/>
    <property type="chains" value="J=1-175"/>
</dbReference>
<dbReference type="PDB" id="6ZKS">
    <property type="method" value="EM"/>
    <property type="resolution" value="3.10 A"/>
    <property type="chains" value="J=1-175"/>
</dbReference>
<dbReference type="PDB" id="6ZKT">
    <property type="method" value="EM"/>
    <property type="resolution" value="2.80 A"/>
    <property type="chains" value="J=1-175"/>
</dbReference>
<dbReference type="PDB" id="6ZKU">
    <property type="method" value="EM"/>
    <property type="resolution" value="3.00 A"/>
    <property type="chains" value="J=1-175"/>
</dbReference>
<dbReference type="PDB" id="6ZKV">
    <property type="method" value="EM"/>
    <property type="resolution" value="2.90 A"/>
    <property type="chains" value="J=1-175"/>
</dbReference>
<dbReference type="PDB" id="7ZD6">
    <property type="method" value="EM"/>
    <property type="resolution" value="3.16 A"/>
    <property type="chains" value="J=1-175"/>
</dbReference>
<dbReference type="PDB" id="7ZDH">
    <property type="method" value="EM"/>
    <property type="resolution" value="3.46 A"/>
    <property type="chains" value="J=1-175"/>
</dbReference>
<dbReference type="PDB" id="7ZDJ">
    <property type="method" value="EM"/>
    <property type="resolution" value="3.25 A"/>
    <property type="chains" value="J=1-175"/>
</dbReference>
<dbReference type="PDB" id="7ZDM">
    <property type="method" value="EM"/>
    <property type="resolution" value="3.44 A"/>
    <property type="chains" value="J=1-175"/>
</dbReference>
<dbReference type="PDB" id="7ZDP">
    <property type="method" value="EM"/>
    <property type="resolution" value="3.88 A"/>
    <property type="chains" value="J=1-175"/>
</dbReference>
<dbReference type="PDB" id="7ZEB">
    <property type="method" value="EM"/>
    <property type="resolution" value="3.80 A"/>
    <property type="chains" value="J=1-175"/>
</dbReference>
<dbReference type="PDBsum" id="5LNK"/>
<dbReference type="PDBsum" id="6Q9B"/>
<dbReference type="PDBsum" id="6QA9"/>
<dbReference type="PDBsum" id="6QBX"/>
<dbReference type="PDBsum" id="6QC2"/>
<dbReference type="PDBsum" id="6QC3"/>
<dbReference type="PDBsum" id="6QC4"/>
<dbReference type="PDBsum" id="6QC5"/>
<dbReference type="PDBsum" id="6QC6"/>
<dbReference type="PDBsum" id="6QC7"/>
<dbReference type="PDBsum" id="6QC8"/>
<dbReference type="PDBsum" id="6QC9"/>
<dbReference type="PDBsum" id="6QCA"/>
<dbReference type="PDBsum" id="6QCF"/>
<dbReference type="PDBsum" id="6ZKA"/>
<dbReference type="PDBsum" id="6ZKB"/>
<dbReference type="PDBsum" id="6ZKC"/>
<dbReference type="PDBsum" id="6ZKD"/>
<dbReference type="PDBsum" id="6ZKE"/>
<dbReference type="PDBsum" id="6ZKF"/>
<dbReference type="PDBsum" id="6ZKG"/>
<dbReference type="PDBsum" id="6ZKH"/>
<dbReference type="PDBsum" id="6ZKI"/>
<dbReference type="PDBsum" id="6ZKJ"/>
<dbReference type="PDBsum" id="6ZKK"/>
<dbReference type="PDBsum" id="6ZKL"/>
<dbReference type="PDBsum" id="6ZKM"/>
<dbReference type="PDBsum" id="6ZKN"/>
<dbReference type="PDBsum" id="6ZKO"/>
<dbReference type="PDBsum" id="6ZKP"/>
<dbReference type="PDBsum" id="6ZKQ"/>
<dbReference type="PDBsum" id="6ZKR"/>
<dbReference type="PDBsum" id="6ZKS"/>
<dbReference type="PDBsum" id="6ZKT"/>
<dbReference type="PDBsum" id="6ZKU"/>
<dbReference type="PDBsum" id="6ZKV"/>
<dbReference type="PDBsum" id="7ZD6"/>
<dbReference type="PDBsum" id="7ZDH"/>
<dbReference type="PDBsum" id="7ZDJ"/>
<dbReference type="PDBsum" id="7ZDM"/>
<dbReference type="PDBsum" id="7ZDP"/>
<dbReference type="PDBsum" id="7ZEB"/>
<dbReference type="EMDB" id="EMD-11242"/>
<dbReference type="EMDB" id="EMD-11243"/>
<dbReference type="EMDB" id="EMD-11244"/>
<dbReference type="EMDB" id="EMD-11245"/>
<dbReference type="EMDB" id="EMD-11246"/>
<dbReference type="EMDB" id="EMD-11247"/>
<dbReference type="EMDB" id="EMD-11248"/>
<dbReference type="EMDB" id="EMD-11249"/>
<dbReference type="EMDB" id="EMD-11250"/>
<dbReference type="EMDB" id="EMD-11251"/>
<dbReference type="EMDB" id="EMD-11252"/>
<dbReference type="EMDB" id="EMD-11253"/>
<dbReference type="EMDB" id="EMD-11254"/>
<dbReference type="EMDB" id="EMD-11255"/>
<dbReference type="EMDB" id="EMD-11256"/>
<dbReference type="EMDB" id="EMD-11257"/>
<dbReference type="EMDB" id="EMD-11258"/>
<dbReference type="EMDB" id="EMD-11259"/>
<dbReference type="EMDB" id="EMD-11260"/>
<dbReference type="EMDB" id="EMD-11261"/>
<dbReference type="EMDB" id="EMD-11262"/>
<dbReference type="EMDB" id="EMD-11263"/>
<dbReference type="EMDB" id="EMD-14637"/>
<dbReference type="EMDB" id="EMD-14648"/>
<dbReference type="EMDB" id="EMD-14651"/>
<dbReference type="EMDB" id="EMD-14658"/>
<dbReference type="EMDB" id="EMD-14664"/>
<dbReference type="EMDB" id="EMD-14688"/>
<dbReference type="EMDB" id="EMD-4479"/>
<dbReference type="EMDB" id="EMD-4482"/>
<dbReference type="EMDB" id="EMD-4493"/>
<dbReference type="EMDB" id="EMD-4494"/>
<dbReference type="EMDB" id="EMD-4495"/>
<dbReference type="EMDB" id="EMD-4496"/>
<dbReference type="EMDB" id="EMD-4497"/>
<dbReference type="EMDB" id="EMD-4498"/>
<dbReference type="EMDB" id="EMD-4499"/>
<dbReference type="EMDB" id="EMD-4500"/>
<dbReference type="EMDB" id="EMD-4501"/>
<dbReference type="EMDB" id="EMD-4502"/>
<dbReference type="EMDB" id="EMD-4505"/>
<dbReference type="EMDB" id="EMD-8128"/>
<dbReference type="SMR" id="O78757"/>
<dbReference type="STRING" id="9940.ENSOARP00000000012"/>
<dbReference type="PaxDb" id="9940-ENSOARP00000000012"/>
<dbReference type="Ensembl" id="ENSOART00025000034">
    <property type="protein sequence ID" value="ENSOARP00025000013"/>
    <property type="gene ID" value="ENSOARG00025000034"/>
</dbReference>
<dbReference type="Ensembl" id="ENSOART00040000034">
    <property type="protein sequence ID" value="ENSOARP00040000013"/>
    <property type="gene ID" value="ENSOARG00040000034"/>
</dbReference>
<dbReference type="Ensembl" id="ENSOART00180000034">
    <property type="protein sequence ID" value="ENSOARP00180000013"/>
    <property type="gene ID" value="ENSOARG00180000034"/>
</dbReference>
<dbReference type="Ensembl" id="ENSOART00185000034">
    <property type="protein sequence ID" value="ENSOARP00185000013"/>
    <property type="gene ID" value="ENSOARG00185000034"/>
</dbReference>
<dbReference type="Ensembl" id="ENSOART00215000034">
    <property type="protein sequence ID" value="ENSOARP00215000013"/>
    <property type="gene ID" value="ENSOARG00215000034"/>
</dbReference>
<dbReference type="Ensembl" id="ENSOART00220000034">
    <property type="protein sequence ID" value="ENSOARP00220000013"/>
    <property type="gene ID" value="ENSOARG00220000034"/>
</dbReference>
<dbReference type="Ensembl" id="ENSOART00225000034">
    <property type="protein sequence ID" value="ENSOARP00225000013"/>
    <property type="gene ID" value="ENSOARG00225000034"/>
</dbReference>
<dbReference type="Ensembl" id="ENSOART00260000034">
    <property type="protein sequence ID" value="ENSOARP00260000013"/>
    <property type="gene ID" value="ENSOARG00260000034"/>
</dbReference>
<dbReference type="GeneID" id="808259"/>
<dbReference type="KEGG" id="oas:808259"/>
<dbReference type="CTD" id="4541"/>
<dbReference type="eggNOG" id="ENOG502S2Q2">
    <property type="taxonomic scope" value="Eukaryota"/>
</dbReference>
<dbReference type="HOGENOM" id="CLU_129718_0_0_1"/>
<dbReference type="OMA" id="WVIYDTG"/>
<dbReference type="OrthoDB" id="9837654at2759"/>
<dbReference type="Proteomes" id="UP000002356">
    <property type="component" value="Mitochondrion"/>
</dbReference>
<dbReference type="Bgee" id="ENSOARG00000000033">
    <property type="expression patterns" value="Expressed in adult mammalian kidney and 54 other cell types or tissues"/>
</dbReference>
<dbReference type="ExpressionAtlas" id="O78757">
    <property type="expression patterns" value="baseline and differential"/>
</dbReference>
<dbReference type="GO" id="GO:0005743">
    <property type="term" value="C:mitochondrial inner membrane"/>
    <property type="evidence" value="ECO:0000250"/>
    <property type="project" value="UniProtKB"/>
</dbReference>
<dbReference type="GO" id="GO:0045271">
    <property type="term" value="C:respiratory chain complex I"/>
    <property type="evidence" value="ECO:0007669"/>
    <property type="project" value="Ensembl"/>
</dbReference>
<dbReference type="GO" id="GO:0008137">
    <property type="term" value="F:NADH dehydrogenase (ubiquinone) activity"/>
    <property type="evidence" value="ECO:0000250"/>
    <property type="project" value="UniProtKB"/>
</dbReference>
<dbReference type="GO" id="GO:0006120">
    <property type="term" value="P:mitochondrial electron transport, NADH to ubiquinone"/>
    <property type="evidence" value="ECO:0000250"/>
    <property type="project" value="UniProtKB"/>
</dbReference>
<dbReference type="GO" id="GO:0032981">
    <property type="term" value="P:mitochondrial respiratory chain complex I assembly"/>
    <property type="evidence" value="ECO:0000250"/>
    <property type="project" value="UniProtKB"/>
</dbReference>
<dbReference type="Gene3D" id="1.20.120.1200">
    <property type="entry name" value="NADH-ubiquinone/plastoquinone oxidoreductase chain 6, subunit NuoJ"/>
    <property type="match status" value="1"/>
</dbReference>
<dbReference type="InterPro" id="IPR050269">
    <property type="entry name" value="ComplexI_Subunit6"/>
</dbReference>
<dbReference type="InterPro" id="IPR001457">
    <property type="entry name" value="NADH_UbQ/plastoQ_OxRdtase_su6"/>
</dbReference>
<dbReference type="InterPro" id="IPR042106">
    <property type="entry name" value="Nuo/plastoQ_OxRdtase_6_NuoJ"/>
</dbReference>
<dbReference type="PANTHER" id="PTHR11435">
    <property type="entry name" value="NADH UBIQUINONE OXIDOREDUCTASE SUBUNIT ND6"/>
    <property type="match status" value="1"/>
</dbReference>
<dbReference type="PANTHER" id="PTHR11435:SF1">
    <property type="entry name" value="NADH-UBIQUINONE OXIDOREDUCTASE CHAIN 6"/>
    <property type="match status" value="1"/>
</dbReference>
<dbReference type="Pfam" id="PF00499">
    <property type="entry name" value="Oxidored_q3"/>
    <property type="match status" value="1"/>
</dbReference>
<protein>
    <recommendedName>
        <fullName>NADH-ubiquinone oxidoreductase chain 6</fullName>
        <ecNumber evidence="1">7.1.1.2</ecNumber>
    </recommendedName>
    <alternativeName>
        <fullName>NADH dehydrogenase subunit 6</fullName>
    </alternativeName>
</protein>
<proteinExistence type="evidence at protein level"/>
<accession>O78757</accession>
<name>NU6M_SHEEP</name>
<comment type="function">
    <text evidence="1">Core subunit of the mitochondrial membrane respiratory chain NADH dehydrogenase (Complex I) which catalyzes electron transfer from NADH through the respiratory chain, using ubiquinone as an electron acceptor. Essential for the catalytic activity and assembly of complex I.</text>
</comment>
<comment type="catalytic activity">
    <reaction evidence="1">
        <text>a ubiquinone + NADH + 5 H(+)(in) = a ubiquinol + NAD(+) + 4 H(+)(out)</text>
        <dbReference type="Rhea" id="RHEA:29091"/>
        <dbReference type="Rhea" id="RHEA-COMP:9565"/>
        <dbReference type="Rhea" id="RHEA-COMP:9566"/>
        <dbReference type="ChEBI" id="CHEBI:15378"/>
        <dbReference type="ChEBI" id="CHEBI:16389"/>
        <dbReference type="ChEBI" id="CHEBI:17976"/>
        <dbReference type="ChEBI" id="CHEBI:57540"/>
        <dbReference type="ChEBI" id="CHEBI:57945"/>
        <dbReference type="EC" id="7.1.1.2"/>
    </reaction>
</comment>
<comment type="subunit">
    <text evidence="2">Core subunit of respiratory chain NADH dehydrogenase (Complex I) which is composed of 45 different subunits.</text>
</comment>
<comment type="subcellular location">
    <subcellularLocation>
        <location evidence="2">Mitochondrion inner membrane</location>
        <topology evidence="3">Multi-pass membrane protein</topology>
    </subcellularLocation>
</comment>
<comment type="similarity">
    <text evidence="4">Belongs to the complex I subunit 6 family.</text>
</comment>
<feature type="chain" id="PRO_0000118333" description="NADH-ubiquinone oxidoreductase chain 6">
    <location>
        <begin position="1"/>
        <end position="175"/>
    </location>
</feature>
<feature type="transmembrane region" description="Helical" evidence="3">
    <location>
        <begin position="1"/>
        <end position="21"/>
    </location>
</feature>
<feature type="transmembrane region" description="Helical" evidence="3">
    <location>
        <begin position="25"/>
        <end position="45"/>
    </location>
</feature>
<feature type="transmembrane region" description="Helical" evidence="3">
    <location>
        <begin position="47"/>
        <end position="67"/>
    </location>
</feature>
<feature type="transmembrane region" description="Helical" evidence="3">
    <location>
        <begin position="88"/>
        <end position="108"/>
    </location>
</feature>
<feature type="transmembrane region" description="Helical" evidence="3">
    <location>
        <begin position="149"/>
        <end position="169"/>
    </location>
</feature>
<feature type="helix" evidence="6">
    <location>
        <begin position="2"/>
        <end position="4"/>
    </location>
</feature>
<feature type="helix" evidence="6">
    <location>
        <begin position="5"/>
        <end position="21"/>
    </location>
</feature>
<feature type="helix" evidence="6">
    <location>
        <begin position="26"/>
        <end position="46"/>
    </location>
</feature>
<feature type="helix" evidence="6">
    <location>
        <begin position="50"/>
        <end position="58"/>
    </location>
</feature>
<feature type="helix" evidence="6">
    <location>
        <begin position="59"/>
        <end position="63"/>
    </location>
</feature>
<feature type="helix" evidence="6">
    <location>
        <begin position="64"/>
        <end position="75"/>
    </location>
</feature>
<feature type="strand" evidence="7">
    <location>
        <begin position="83"/>
        <end position="86"/>
    </location>
</feature>
<feature type="helix" evidence="6">
    <location>
        <begin position="87"/>
        <end position="110"/>
    </location>
</feature>
<feature type="strand" evidence="6">
    <location>
        <begin position="111"/>
        <end position="120"/>
    </location>
</feature>
<feature type="turn" evidence="6">
    <location>
        <begin position="124"/>
        <end position="127"/>
    </location>
</feature>
<feature type="strand" evidence="7">
    <location>
        <begin position="128"/>
        <end position="131"/>
    </location>
</feature>
<feature type="strand" evidence="8">
    <location>
        <begin position="134"/>
        <end position="136"/>
    </location>
</feature>
<feature type="helix" evidence="6">
    <location>
        <begin position="138"/>
        <end position="144"/>
    </location>
</feature>
<feature type="turn" evidence="6">
    <location>
        <begin position="145"/>
        <end position="149"/>
    </location>
</feature>
<feature type="helix" evidence="6">
    <location>
        <begin position="151"/>
        <end position="171"/>
    </location>
</feature>